<proteinExistence type="inferred from homology"/>
<name>CH60_NITV4</name>
<evidence type="ECO:0000255" key="1">
    <source>
        <dbReference type="HAMAP-Rule" id="MF_00600"/>
    </source>
</evidence>
<feature type="chain" id="PRO_1000025776" description="Chaperonin GroEL">
    <location>
        <begin position="1"/>
        <end position="547"/>
    </location>
</feature>
<feature type="binding site" evidence="1">
    <location>
        <begin position="30"/>
        <end position="33"/>
    </location>
    <ligand>
        <name>ATP</name>
        <dbReference type="ChEBI" id="CHEBI:30616"/>
    </ligand>
</feature>
<feature type="binding site" evidence="1">
    <location>
        <position position="51"/>
    </location>
    <ligand>
        <name>ATP</name>
        <dbReference type="ChEBI" id="CHEBI:30616"/>
    </ligand>
</feature>
<feature type="binding site" evidence="1">
    <location>
        <begin position="87"/>
        <end position="91"/>
    </location>
    <ligand>
        <name>ATP</name>
        <dbReference type="ChEBI" id="CHEBI:30616"/>
    </ligand>
</feature>
<feature type="binding site" evidence="1">
    <location>
        <position position="415"/>
    </location>
    <ligand>
        <name>ATP</name>
        <dbReference type="ChEBI" id="CHEBI:30616"/>
    </ligand>
</feature>
<feature type="binding site" evidence="1">
    <location>
        <begin position="479"/>
        <end position="481"/>
    </location>
    <ligand>
        <name>ATP</name>
        <dbReference type="ChEBI" id="CHEBI:30616"/>
    </ligand>
</feature>
<feature type="binding site" evidence="1">
    <location>
        <position position="495"/>
    </location>
    <ligand>
        <name>ATP</name>
        <dbReference type="ChEBI" id="CHEBI:30616"/>
    </ligand>
</feature>
<comment type="function">
    <text evidence="1">Together with its co-chaperonin GroES, plays an essential role in assisting protein folding. The GroEL-GroES system forms a nano-cage that allows encapsulation of the non-native substrate proteins and provides a physical environment optimized to promote and accelerate protein folding.</text>
</comment>
<comment type="catalytic activity">
    <reaction evidence="1">
        <text>ATP + H2O + a folded polypeptide = ADP + phosphate + an unfolded polypeptide.</text>
        <dbReference type="EC" id="5.6.1.7"/>
    </reaction>
</comment>
<comment type="subunit">
    <text evidence="1">Forms a cylinder of 14 subunits composed of two heptameric rings stacked back-to-back. Interacts with the co-chaperonin GroES.</text>
</comment>
<comment type="subcellular location">
    <subcellularLocation>
        <location evidence="1">Cytoplasm</location>
    </subcellularLocation>
</comment>
<comment type="similarity">
    <text evidence="1">Belongs to the chaperonin (HSP60) family.</text>
</comment>
<accession>A1VCQ0</accession>
<keyword id="KW-0067">ATP-binding</keyword>
<keyword id="KW-0143">Chaperone</keyword>
<keyword id="KW-0963">Cytoplasm</keyword>
<keyword id="KW-0413">Isomerase</keyword>
<keyword id="KW-0547">Nucleotide-binding</keyword>
<dbReference type="EC" id="5.6.1.7" evidence="1"/>
<dbReference type="EMBL" id="CP000527">
    <property type="protein sequence ID" value="ABM28216.1"/>
    <property type="molecule type" value="Genomic_DNA"/>
</dbReference>
<dbReference type="RefSeq" id="WP_010939262.1">
    <property type="nucleotide sequence ID" value="NC_008751.1"/>
</dbReference>
<dbReference type="SMR" id="A1VCQ0"/>
<dbReference type="KEGG" id="dvl:Dvul_1196"/>
<dbReference type="HOGENOM" id="CLU_016503_3_0_7"/>
<dbReference type="Proteomes" id="UP000009173">
    <property type="component" value="Chromosome"/>
</dbReference>
<dbReference type="GO" id="GO:0005737">
    <property type="term" value="C:cytoplasm"/>
    <property type="evidence" value="ECO:0007669"/>
    <property type="project" value="UniProtKB-SubCell"/>
</dbReference>
<dbReference type="GO" id="GO:0005524">
    <property type="term" value="F:ATP binding"/>
    <property type="evidence" value="ECO:0007669"/>
    <property type="project" value="UniProtKB-UniRule"/>
</dbReference>
<dbReference type="GO" id="GO:0140662">
    <property type="term" value="F:ATP-dependent protein folding chaperone"/>
    <property type="evidence" value="ECO:0007669"/>
    <property type="project" value="InterPro"/>
</dbReference>
<dbReference type="GO" id="GO:0016853">
    <property type="term" value="F:isomerase activity"/>
    <property type="evidence" value="ECO:0007669"/>
    <property type="project" value="UniProtKB-KW"/>
</dbReference>
<dbReference type="GO" id="GO:0051082">
    <property type="term" value="F:unfolded protein binding"/>
    <property type="evidence" value="ECO:0007669"/>
    <property type="project" value="UniProtKB-UniRule"/>
</dbReference>
<dbReference type="GO" id="GO:0042026">
    <property type="term" value="P:protein refolding"/>
    <property type="evidence" value="ECO:0007669"/>
    <property type="project" value="UniProtKB-UniRule"/>
</dbReference>
<dbReference type="CDD" id="cd03344">
    <property type="entry name" value="GroEL"/>
    <property type="match status" value="1"/>
</dbReference>
<dbReference type="FunFam" id="3.50.7.10:FF:000001">
    <property type="entry name" value="60 kDa chaperonin"/>
    <property type="match status" value="1"/>
</dbReference>
<dbReference type="Gene3D" id="3.50.7.10">
    <property type="entry name" value="GroEL"/>
    <property type="match status" value="1"/>
</dbReference>
<dbReference type="Gene3D" id="1.10.560.10">
    <property type="entry name" value="GroEL-like equatorial domain"/>
    <property type="match status" value="1"/>
</dbReference>
<dbReference type="Gene3D" id="3.30.260.10">
    <property type="entry name" value="TCP-1-like chaperonin intermediate domain"/>
    <property type="match status" value="1"/>
</dbReference>
<dbReference type="HAMAP" id="MF_00600">
    <property type="entry name" value="CH60"/>
    <property type="match status" value="1"/>
</dbReference>
<dbReference type="InterPro" id="IPR018370">
    <property type="entry name" value="Chaperonin_Cpn60_CS"/>
</dbReference>
<dbReference type="InterPro" id="IPR001844">
    <property type="entry name" value="Cpn60/GroEL"/>
</dbReference>
<dbReference type="InterPro" id="IPR002423">
    <property type="entry name" value="Cpn60/GroEL/TCP-1"/>
</dbReference>
<dbReference type="InterPro" id="IPR027409">
    <property type="entry name" value="GroEL-like_apical_dom_sf"/>
</dbReference>
<dbReference type="InterPro" id="IPR027413">
    <property type="entry name" value="GROEL-like_equatorial_sf"/>
</dbReference>
<dbReference type="InterPro" id="IPR027410">
    <property type="entry name" value="TCP-1-like_intermed_sf"/>
</dbReference>
<dbReference type="NCBIfam" id="TIGR02348">
    <property type="entry name" value="GroEL"/>
    <property type="match status" value="1"/>
</dbReference>
<dbReference type="NCBIfam" id="NF000592">
    <property type="entry name" value="PRK00013.1"/>
    <property type="match status" value="1"/>
</dbReference>
<dbReference type="NCBIfam" id="NF009487">
    <property type="entry name" value="PRK12849.1"/>
    <property type="match status" value="1"/>
</dbReference>
<dbReference type="NCBIfam" id="NF009488">
    <property type="entry name" value="PRK12850.1"/>
    <property type="match status" value="1"/>
</dbReference>
<dbReference type="NCBIfam" id="NF009489">
    <property type="entry name" value="PRK12851.1"/>
    <property type="match status" value="1"/>
</dbReference>
<dbReference type="PANTHER" id="PTHR45633">
    <property type="entry name" value="60 KDA HEAT SHOCK PROTEIN, MITOCHONDRIAL"/>
    <property type="match status" value="1"/>
</dbReference>
<dbReference type="Pfam" id="PF00118">
    <property type="entry name" value="Cpn60_TCP1"/>
    <property type="match status" value="1"/>
</dbReference>
<dbReference type="PRINTS" id="PR00298">
    <property type="entry name" value="CHAPERONIN60"/>
</dbReference>
<dbReference type="SUPFAM" id="SSF52029">
    <property type="entry name" value="GroEL apical domain-like"/>
    <property type="match status" value="1"/>
</dbReference>
<dbReference type="SUPFAM" id="SSF48592">
    <property type="entry name" value="GroEL equatorial domain-like"/>
    <property type="match status" value="1"/>
</dbReference>
<dbReference type="SUPFAM" id="SSF54849">
    <property type="entry name" value="GroEL-intermediate domain like"/>
    <property type="match status" value="1"/>
</dbReference>
<dbReference type="PROSITE" id="PS00296">
    <property type="entry name" value="CHAPERONINS_CPN60"/>
    <property type="match status" value="1"/>
</dbReference>
<organism>
    <name type="scientific">Nitratidesulfovibrio vulgaris (strain DP4)</name>
    <name type="common">Desulfovibrio vulgaris</name>
    <dbReference type="NCBI Taxonomy" id="391774"/>
    <lineage>
        <taxon>Bacteria</taxon>
        <taxon>Pseudomonadati</taxon>
        <taxon>Thermodesulfobacteriota</taxon>
        <taxon>Desulfovibrionia</taxon>
        <taxon>Desulfovibrionales</taxon>
        <taxon>Desulfovibrionaceae</taxon>
        <taxon>Nitratidesulfovibrio</taxon>
    </lineage>
</organism>
<sequence>MASKEILFDTKAREKLSRGVDKLANAVKVTLGPKGRNVVIEKSFGSPVITKDGVSVAKEIELEDKFENMGAQMVKEVASKTSDIAGDGTTTATILAQAIYREGVKLVAAGRNPMAIKRGVDKAVESLVRELGNLAKPTRDQKEIAQVGTISANSDSTIGNIIAEAMSKVGKEGVITVEEAKGLETTLEVVEGMQFDRGYLSPYFVTDPEKMVCELDEPFILCNEKKISTMKDMLPVLEQVAKMQRPLVIIAEDVDGEALATLVVNKLRGALQVVAIKAPGFGERRKAMLQDIAVLTGGQVVSEDMGIKLENISVADLGTAKRVVIDKENTTIVDGAGKGDDIKARVKQIRAQIEETTSDYDREKLQERLAKLVGGVAVIHVGAATETEMKEKKDRVEDALNATRAAVEEGIVPGGGTALVRVAKVLDDIKPADDDETAGVNIIRRAIEEPLRQIASNAGFEGSIVVERVREGKDGFGFNAATGEYEDLIGVGVIDPKKVTRIALQNAASVASLLLTTECAIAEKPEPKKDMPMPGGMGGMGGMGGMY</sequence>
<gene>
    <name evidence="1" type="primary">groEL</name>
    <name evidence="1" type="synonym">groL</name>
    <name type="ordered locus">Dvul_1196</name>
</gene>
<reference key="1">
    <citation type="journal article" date="2009" name="Environ. Microbiol.">
        <title>Contribution of mobile genetic elements to Desulfovibrio vulgaris genome plasticity.</title>
        <authorList>
            <person name="Walker C.B."/>
            <person name="Stolyar S."/>
            <person name="Chivian D."/>
            <person name="Pinel N."/>
            <person name="Gabster J.A."/>
            <person name="Dehal P.S."/>
            <person name="He Z."/>
            <person name="Yang Z.K."/>
            <person name="Yen H.C."/>
            <person name="Zhou J."/>
            <person name="Wall J.D."/>
            <person name="Hazen T.C."/>
            <person name="Arkin A.P."/>
            <person name="Stahl D.A."/>
        </authorList>
    </citation>
    <scope>NUCLEOTIDE SEQUENCE [LARGE SCALE GENOMIC DNA]</scope>
    <source>
        <strain>DP4</strain>
    </source>
</reference>
<protein>
    <recommendedName>
        <fullName evidence="1">Chaperonin GroEL</fullName>
        <ecNumber evidence="1">5.6.1.7</ecNumber>
    </recommendedName>
    <alternativeName>
        <fullName evidence="1">60 kDa chaperonin</fullName>
    </alternativeName>
    <alternativeName>
        <fullName evidence="1">Chaperonin-60</fullName>
        <shortName evidence="1">Cpn60</shortName>
    </alternativeName>
</protein>